<keyword id="KW-0148">Chlorophyll</keyword>
<keyword id="KW-0150">Chloroplast</keyword>
<keyword id="KW-0157">Chromophore</keyword>
<keyword id="KW-0437">Light-harvesting polypeptide</keyword>
<keyword id="KW-0934">Plastid</keyword>
<keyword id="KW-0677">Repeat</keyword>
<keyword id="KW-0809">Transit peptide</keyword>
<reference key="1">
    <citation type="journal article" date="1996" name="Biochim. Biophys. Acta">
        <title>Two distinct forms of the peridinin-chlorophyll a-protein from Amphidinium carterae.</title>
        <authorList>
            <person name="Sharples F.P."/>
            <person name="Wrench P.M."/>
            <person name="Ou K."/>
            <person name="Hiller R.G."/>
        </authorList>
    </citation>
    <scope>NUCLEOTIDE SEQUENCE [GENOMIC DNA]</scope>
    <source>
        <strain>CS21</strain>
    </source>
</reference>
<dbReference type="EMBL" id="Z50793">
    <property type="protein sequence ID" value="CAA90654.1"/>
    <property type="molecule type" value="Genomic_DNA"/>
</dbReference>
<dbReference type="PIR" id="S60186">
    <property type="entry name" value="S60186"/>
</dbReference>
<dbReference type="SMR" id="P51873"/>
<dbReference type="GO" id="GO:0009507">
    <property type="term" value="C:chloroplast"/>
    <property type="evidence" value="ECO:0007669"/>
    <property type="project" value="UniProtKB-SubCell"/>
</dbReference>
<dbReference type="GO" id="GO:0030076">
    <property type="term" value="C:light-harvesting complex"/>
    <property type="evidence" value="ECO:0007669"/>
    <property type="project" value="UniProtKB-KW"/>
</dbReference>
<dbReference type="GO" id="GO:0016168">
    <property type="term" value="F:chlorophyll binding"/>
    <property type="evidence" value="ECO:0007669"/>
    <property type="project" value="UniProtKB-KW"/>
</dbReference>
<dbReference type="Gene3D" id="1.40.10.10">
    <property type="entry name" value="Peridinin-chlorophyll A binding"/>
    <property type="match status" value="2"/>
</dbReference>
<dbReference type="InterPro" id="IPR003376">
    <property type="entry name" value="Peridinin-chlorophyll-bd_prot"/>
</dbReference>
<dbReference type="InterPro" id="IPR036550">
    <property type="entry name" value="Peridinin-chlorophyll-bd_sf"/>
</dbReference>
<dbReference type="Pfam" id="PF02429">
    <property type="entry name" value="PCP"/>
    <property type="match status" value="2"/>
</dbReference>
<dbReference type="SUPFAM" id="SSF48608">
    <property type="entry name" value="Peridinin-chlorophyll protein"/>
    <property type="match status" value="2"/>
</dbReference>
<protein>
    <recommendedName>
        <fullName>Peridinin-chlorophyll a-binding protein 2, chloroplastic</fullName>
        <shortName>PCP</shortName>
    </recommendedName>
</protein>
<comment type="function">
    <text>Water-soluble antenna for capture of solar energy in the blue-green range. Peridinin is an asymmetric carotenoid.</text>
</comment>
<comment type="biophysicochemical properties">
    <absorption>
        <max>~480 nm</max>
    </absorption>
</comment>
<comment type="subunit">
    <text>Homotrimer.</text>
</comment>
<comment type="subcellular location">
    <subcellularLocation>
        <location>Plastid</location>
        <location>Chloroplast</location>
    </subcellularLocation>
</comment>
<comment type="domain">
    <text>The mature protein is composed of 2 almost identical repeat units.</text>
</comment>
<sequence length="369" mass="38119">MVRSGKKAVVLATVAFCATSVVQKTCGFVPSPLRQRAAAAGAAASVATMFAPAAFADEIGDAAKTLGDASYAFAKEVDWNNGIFLQAPGKLQPLAALKAIDKMIVMGAAADPQLLKAAAEAHHKAITTVSGANGVTSRADWDNVNAALGRVISAVPEKMVMDVYNSVAKITDPKVPAYMNSLVNGADAEKAYAGFLAFKDVVKKNQVTSAAGPATVPSGDTIGVAAQKLSDASYPFLKQIDWLSDVYLKPLPGVSAQQSLKAIDRMIVMGAQADGNALKAAAEAHHKAIGSIDAKGVTSAADYAEVNAAIGRVVASVPKSTVMDVYKAMASVTDTGIPLNMFSKVNPLDANAAAKAFYTFKDVVLAAQR</sequence>
<proteinExistence type="evidence at protein level"/>
<accession>P51873</accession>
<organism>
    <name type="scientific">Amphidinium carterae</name>
    <name type="common">Dinoflagellate</name>
    <dbReference type="NCBI Taxonomy" id="2961"/>
    <lineage>
        <taxon>Eukaryota</taxon>
        <taxon>Sar</taxon>
        <taxon>Alveolata</taxon>
        <taxon>Dinophyceae</taxon>
        <taxon>Amphidiniales</taxon>
        <taxon>Amphidiniaceae</taxon>
        <taxon>Amphidinium</taxon>
    </lineage>
</organism>
<name>PCP2_AMPCA</name>
<feature type="transit peptide" description="Chloroplast">
    <location>
        <begin position="1"/>
        <end position="56"/>
    </location>
</feature>
<feature type="chain" id="PRO_0000022027" description="Peridinin-chlorophyll a-binding protein 2, chloroplastic">
    <location>
        <begin position="57"/>
        <end position="369"/>
    </location>
</feature>
<feature type="repeat" description="1">
    <location>
        <begin position="57"/>
        <end position="219"/>
    </location>
</feature>
<feature type="repeat" description="2">
    <location>
        <begin position="220"/>
        <end position="369"/>
    </location>
</feature>
<feature type="site" description="Chlorophyll a binding">
    <location>
        <position position="122"/>
    </location>
</feature>
<feature type="site" description="Chlorophyll a binding">
    <location>
        <position position="285"/>
    </location>
</feature>